<keyword id="KW-0349">Heme</keyword>
<keyword id="KW-0408">Iron</keyword>
<keyword id="KW-0479">Metal-binding</keyword>
<keyword id="KW-0561">Oxygen transport</keyword>
<keyword id="KW-0597">Phosphoprotein</keyword>
<keyword id="KW-1185">Reference proteome</keyword>
<keyword id="KW-0813">Transport</keyword>
<sequence length="147" mass="16292">MVHFTAEEKAAITSLWSKMNVEEAGGEALGRLLVVYPWTQRFFDNFGNLSSPSAILGNPKVKAHGKKVLTSFGDAIKNMDNLKTTFAKLSELHCDKLHVDPENFRLLGNVMVIILATHFGKEFTPEVQAAWQKLVSAVAIALGHKYH</sequence>
<gene>
    <name type="primary">HBE1</name>
</gene>
<name>HBE_SAIBB</name>
<dbReference type="EMBL" id="U18616">
    <property type="protein sequence ID" value="AAB40983.1"/>
    <property type="molecule type" value="Genomic_DNA"/>
</dbReference>
<dbReference type="RefSeq" id="XP_003923417.1">
    <property type="nucleotide sequence ID" value="XM_003923368.3"/>
</dbReference>
<dbReference type="SMR" id="P68029"/>
<dbReference type="STRING" id="39432.ENSSBOP00000022178"/>
<dbReference type="Ensembl" id="ENSSBOT00000039025.1">
    <property type="protein sequence ID" value="ENSSBOP00000022178.1"/>
    <property type="gene ID" value="ENSSBOG00000027626.1"/>
</dbReference>
<dbReference type="GeneID" id="101035846"/>
<dbReference type="KEGG" id="sbq:101035846"/>
<dbReference type="CTD" id="3046"/>
<dbReference type="GeneTree" id="ENSGT00940000157809"/>
<dbReference type="OMA" id="ICGNPQV"/>
<dbReference type="OrthoDB" id="56375at9443"/>
<dbReference type="Proteomes" id="UP000233220">
    <property type="component" value="Unplaced"/>
</dbReference>
<dbReference type="GO" id="GO:0072562">
    <property type="term" value="C:blood microparticle"/>
    <property type="evidence" value="ECO:0007669"/>
    <property type="project" value="TreeGrafter"/>
</dbReference>
<dbReference type="GO" id="GO:0031838">
    <property type="term" value="C:haptoglobin-hemoglobin complex"/>
    <property type="evidence" value="ECO:0007669"/>
    <property type="project" value="TreeGrafter"/>
</dbReference>
<dbReference type="GO" id="GO:0005833">
    <property type="term" value="C:hemoglobin complex"/>
    <property type="evidence" value="ECO:0007669"/>
    <property type="project" value="Ensembl"/>
</dbReference>
<dbReference type="GO" id="GO:0031720">
    <property type="term" value="F:haptoglobin binding"/>
    <property type="evidence" value="ECO:0007669"/>
    <property type="project" value="TreeGrafter"/>
</dbReference>
<dbReference type="GO" id="GO:0020037">
    <property type="term" value="F:heme binding"/>
    <property type="evidence" value="ECO:0007669"/>
    <property type="project" value="InterPro"/>
</dbReference>
<dbReference type="GO" id="GO:0031721">
    <property type="term" value="F:hemoglobin alpha binding"/>
    <property type="evidence" value="ECO:0007669"/>
    <property type="project" value="TreeGrafter"/>
</dbReference>
<dbReference type="GO" id="GO:0046872">
    <property type="term" value="F:metal ion binding"/>
    <property type="evidence" value="ECO:0007669"/>
    <property type="project" value="UniProtKB-KW"/>
</dbReference>
<dbReference type="GO" id="GO:0043177">
    <property type="term" value="F:organic acid binding"/>
    <property type="evidence" value="ECO:0007669"/>
    <property type="project" value="TreeGrafter"/>
</dbReference>
<dbReference type="GO" id="GO:0019825">
    <property type="term" value="F:oxygen binding"/>
    <property type="evidence" value="ECO:0007669"/>
    <property type="project" value="InterPro"/>
</dbReference>
<dbReference type="GO" id="GO:0005344">
    <property type="term" value="F:oxygen carrier activity"/>
    <property type="evidence" value="ECO:0007669"/>
    <property type="project" value="UniProtKB-KW"/>
</dbReference>
<dbReference type="GO" id="GO:0004601">
    <property type="term" value="F:peroxidase activity"/>
    <property type="evidence" value="ECO:0007669"/>
    <property type="project" value="TreeGrafter"/>
</dbReference>
<dbReference type="GO" id="GO:0042744">
    <property type="term" value="P:hydrogen peroxide catabolic process"/>
    <property type="evidence" value="ECO:0007669"/>
    <property type="project" value="TreeGrafter"/>
</dbReference>
<dbReference type="CDD" id="cd08925">
    <property type="entry name" value="Hb-beta-like"/>
    <property type="match status" value="1"/>
</dbReference>
<dbReference type="FunFam" id="1.10.490.10:FF:000001">
    <property type="entry name" value="Hemoglobin subunit beta"/>
    <property type="match status" value="1"/>
</dbReference>
<dbReference type="Gene3D" id="1.10.490.10">
    <property type="entry name" value="Globins"/>
    <property type="match status" value="1"/>
</dbReference>
<dbReference type="InterPro" id="IPR000971">
    <property type="entry name" value="Globin"/>
</dbReference>
<dbReference type="InterPro" id="IPR009050">
    <property type="entry name" value="Globin-like_sf"/>
</dbReference>
<dbReference type="InterPro" id="IPR012292">
    <property type="entry name" value="Globin/Proto"/>
</dbReference>
<dbReference type="InterPro" id="IPR002337">
    <property type="entry name" value="Hemoglobin_b"/>
</dbReference>
<dbReference type="InterPro" id="IPR050056">
    <property type="entry name" value="Hemoglobin_oxygen_transport"/>
</dbReference>
<dbReference type="PANTHER" id="PTHR11442">
    <property type="entry name" value="HEMOGLOBIN FAMILY MEMBER"/>
    <property type="match status" value="1"/>
</dbReference>
<dbReference type="PANTHER" id="PTHR11442:SF7">
    <property type="entry name" value="HEMOGLOBIN SUBUNIT EPSILON"/>
    <property type="match status" value="1"/>
</dbReference>
<dbReference type="Pfam" id="PF00042">
    <property type="entry name" value="Globin"/>
    <property type="match status" value="1"/>
</dbReference>
<dbReference type="PRINTS" id="PR00814">
    <property type="entry name" value="BETAHAEM"/>
</dbReference>
<dbReference type="SUPFAM" id="SSF46458">
    <property type="entry name" value="Globin-like"/>
    <property type="match status" value="1"/>
</dbReference>
<dbReference type="PROSITE" id="PS01033">
    <property type="entry name" value="GLOBIN"/>
    <property type="match status" value="1"/>
</dbReference>
<evidence type="ECO:0000250" key="1">
    <source>
        <dbReference type="UniProtKB" id="P02100"/>
    </source>
</evidence>
<evidence type="ECO:0000255" key="2">
    <source>
        <dbReference type="PROSITE-ProRule" id="PRU00238"/>
    </source>
</evidence>
<accession>P68029</accession>
<accession>P51444</accession>
<accession>Q29409</accession>
<feature type="chain" id="PRO_0000053228" description="Hemoglobin subunit epsilon">
    <location>
        <begin position="1"/>
        <end position="147"/>
    </location>
</feature>
<feature type="domain" description="Globin" evidence="2">
    <location>
        <begin position="3"/>
        <end position="147"/>
    </location>
</feature>
<feature type="binding site" description="distal binding residue" evidence="2">
    <location>
        <position position="64"/>
    </location>
    <ligand>
        <name>heme b</name>
        <dbReference type="ChEBI" id="CHEBI:60344"/>
    </ligand>
    <ligandPart>
        <name>Fe</name>
        <dbReference type="ChEBI" id="CHEBI:18248"/>
    </ligandPart>
</feature>
<feature type="binding site" description="proximal binding residue" evidence="2">
    <location>
        <position position="93"/>
    </location>
    <ligand>
        <name>heme b</name>
        <dbReference type="ChEBI" id="CHEBI:60344"/>
    </ligand>
    <ligandPart>
        <name>Fe</name>
        <dbReference type="ChEBI" id="CHEBI:18248"/>
    </ligandPart>
</feature>
<feature type="modified residue" description="Phosphoserine" evidence="1">
    <location>
        <position position="14"/>
    </location>
</feature>
<feature type="modified residue" description="Phosphoserine" evidence="1">
    <location>
        <position position="51"/>
    </location>
</feature>
<proteinExistence type="evidence at transcript level"/>
<protein>
    <recommendedName>
        <fullName>Hemoglobin subunit epsilon</fullName>
    </recommendedName>
    <alternativeName>
        <fullName>Epsilon-globin</fullName>
    </alternativeName>
    <alternativeName>
        <fullName>Hemoglobin epsilon chain</fullName>
    </alternativeName>
</protein>
<organism>
    <name type="scientific">Saimiri boliviensis boliviensis</name>
    <name type="common">Bolivian squirrel monkey</name>
    <dbReference type="NCBI Taxonomy" id="39432"/>
    <lineage>
        <taxon>Eukaryota</taxon>
        <taxon>Metazoa</taxon>
        <taxon>Chordata</taxon>
        <taxon>Craniata</taxon>
        <taxon>Vertebrata</taxon>
        <taxon>Euteleostomi</taxon>
        <taxon>Mammalia</taxon>
        <taxon>Eutheria</taxon>
        <taxon>Euarchontoglires</taxon>
        <taxon>Primates</taxon>
        <taxon>Haplorrhini</taxon>
        <taxon>Platyrrhini</taxon>
        <taxon>Cebidae</taxon>
        <taxon>Saimiriinae</taxon>
        <taxon>Saimiri</taxon>
    </lineage>
</organism>
<comment type="function">
    <text>The epsilon chain is a beta-type chain of early mammalian embryonic hemoglobin.</text>
</comment>
<comment type="subunit">
    <text>Heterotetramer of two alpha chains and two epsilon chains in early embryonic hemoglobin Gower-2; two zeta chains and two epsilon chains in early embryonic hemoglobin Gower-1.</text>
</comment>
<comment type="tissue specificity">
    <text>Red blood cells.</text>
</comment>
<comment type="similarity">
    <text evidence="2">Belongs to the globin family.</text>
</comment>
<reference key="1">
    <citation type="journal article" date="1995" name="Mol. Phylogenet. Evol.">
        <title>DNA evidence on the phylogenetic systematics of New World monkeys: support for the sister-grouping of Cebus and Saimiri from two unlinked nuclear genes.</title>
        <authorList>
            <person name="Harada M.L."/>
            <person name="Schneider H."/>
            <person name="Schneider M.P.C."/>
            <person name="Sampaio I."/>
            <person name="Czelusniak J."/>
            <person name="Goodman M."/>
        </authorList>
    </citation>
    <scope>NUCLEOTIDE SEQUENCE [GENOMIC DNA]</scope>
    <source>
        <tissue>Lymphocyte</tissue>
    </source>
</reference>